<protein>
    <recommendedName>
        <fullName>Hemoglobin subunit beta</fullName>
    </recommendedName>
    <alternativeName>
        <fullName>Beta-globin</fullName>
    </alternativeName>
    <alternativeName>
        <fullName>Hemoglobin beta chain</fullName>
    </alternativeName>
</protein>
<keyword id="KW-0007">Acetylation</keyword>
<keyword id="KW-0349">Heme</keyword>
<keyword id="KW-0408">Iron</keyword>
<keyword id="KW-0479">Metal-binding</keyword>
<keyword id="KW-0561">Oxygen transport</keyword>
<keyword id="KW-0702">S-nitrosylation</keyword>
<keyword id="KW-0813">Transport</keyword>
<name>HBB_SMICR</name>
<organism>
    <name type="scientific">Sminthopsis crassicaudata</name>
    <name type="common">Fat-tailed dunnart</name>
    <name type="synonym">Phascogale crassicaudata</name>
    <dbReference type="NCBI Taxonomy" id="9301"/>
    <lineage>
        <taxon>Eukaryota</taxon>
        <taxon>Metazoa</taxon>
        <taxon>Chordata</taxon>
        <taxon>Craniata</taxon>
        <taxon>Vertebrata</taxon>
        <taxon>Euteleostomi</taxon>
        <taxon>Mammalia</taxon>
        <taxon>Metatheria</taxon>
        <taxon>Dasyuromorphia</taxon>
        <taxon>Dasyuridae</taxon>
        <taxon>Sminthopsis</taxon>
    </lineage>
</organism>
<feature type="initiator methionine" description="Removed" evidence="1">
    <location>
        <position position="1"/>
    </location>
</feature>
<feature type="chain" id="PRO_0000053109" description="Hemoglobin subunit beta">
    <location>
        <begin position="2"/>
        <end position="147"/>
    </location>
</feature>
<feature type="domain" description="Globin" evidence="3">
    <location>
        <begin position="3"/>
        <end position="147"/>
    </location>
</feature>
<feature type="binding site" description="distal binding residue">
    <location>
        <position position="64"/>
    </location>
    <ligand>
        <name>heme b</name>
        <dbReference type="ChEBI" id="CHEBI:60344"/>
    </ligand>
    <ligandPart>
        <name>Fe</name>
        <dbReference type="ChEBI" id="CHEBI:18248"/>
    </ligandPart>
</feature>
<feature type="binding site" description="proximal binding residue">
    <location>
        <position position="93"/>
    </location>
    <ligand>
        <name>heme b</name>
        <dbReference type="ChEBI" id="CHEBI:60344"/>
    </ligand>
    <ligandPart>
        <name>Fe</name>
        <dbReference type="ChEBI" id="CHEBI:18248"/>
    </ligandPart>
</feature>
<feature type="modified residue" description="N-acetylvaline" evidence="1">
    <location>
        <position position="2"/>
    </location>
</feature>
<feature type="modified residue" description="N6-acetyllysine" evidence="2">
    <location>
        <position position="60"/>
    </location>
</feature>
<feature type="modified residue" description="N6-acetyllysine" evidence="2">
    <location>
        <position position="83"/>
    </location>
</feature>
<feature type="modified residue" description="S-nitrosocysteine" evidence="2">
    <location>
        <position position="94"/>
    </location>
</feature>
<feature type="modified residue" description="N6-acetyllysine" evidence="2">
    <location>
        <position position="145"/>
    </location>
</feature>
<comment type="function">
    <text>Involved in oxygen transport from the lung to the various peripheral tissues.</text>
</comment>
<comment type="subunit">
    <text>Heterotetramer of two alpha chains and two beta chains.</text>
</comment>
<comment type="tissue specificity">
    <text>Red blood cells.</text>
</comment>
<comment type="similarity">
    <text evidence="3">Belongs to the globin family.</text>
</comment>
<gene>
    <name type="primary">HBB</name>
</gene>
<sequence>MVHLSAEEKGHINAIWSKVSVDQTGAEALGRLLIVYPWTSRFFDHFGDLSSAKGVMGNAKVQGHGAKVLTSFGDAVKNMDNLKGTFAKLSELHCDKLHVDPENFRLLGNILVICLAEHFGKDFTPEVQAAWQKLVAGVATALAHKYH</sequence>
<dbReference type="EMBL" id="Z69592">
    <property type="protein sequence ID" value="CAA93439.1"/>
    <property type="molecule type" value="Genomic_DNA"/>
</dbReference>
<dbReference type="PIR" id="B49402">
    <property type="entry name" value="B49402"/>
</dbReference>
<dbReference type="SMR" id="Q28932"/>
<dbReference type="GO" id="GO:0072562">
    <property type="term" value="C:blood microparticle"/>
    <property type="evidence" value="ECO:0007669"/>
    <property type="project" value="TreeGrafter"/>
</dbReference>
<dbReference type="GO" id="GO:0031838">
    <property type="term" value="C:haptoglobin-hemoglobin complex"/>
    <property type="evidence" value="ECO:0007669"/>
    <property type="project" value="TreeGrafter"/>
</dbReference>
<dbReference type="GO" id="GO:0005833">
    <property type="term" value="C:hemoglobin complex"/>
    <property type="evidence" value="ECO:0007669"/>
    <property type="project" value="InterPro"/>
</dbReference>
<dbReference type="GO" id="GO:0031720">
    <property type="term" value="F:haptoglobin binding"/>
    <property type="evidence" value="ECO:0007669"/>
    <property type="project" value="TreeGrafter"/>
</dbReference>
<dbReference type="GO" id="GO:0020037">
    <property type="term" value="F:heme binding"/>
    <property type="evidence" value="ECO:0007669"/>
    <property type="project" value="InterPro"/>
</dbReference>
<dbReference type="GO" id="GO:0046872">
    <property type="term" value="F:metal ion binding"/>
    <property type="evidence" value="ECO:0007669"/>
    <property type="project" value="UniProtKB-KW"/>
</dbReference>
<dbReference type="GO" id="GO:0043177">
    <property type="term" value="F:organic acid binding"/>
    <property type="evidence" value="ECO:0007669"/>
    <property type="project" value="TreeGrafter"/>
</dbReference>
<dbReference type="GO" id="GO:0019825">
    <property type="term" value="F:oxygen binding"/>
    <property type="evidence" value="ECO:0007669"/>
    <property type="project" value="InterPro"/>
</dbReference>
<dbReference type="GO" id="GO:0005344">
    <property type="term" value="F:oxygen carrier activity"/>
    <property type="evidence" value="ECO:0007669"/>
    <property type="project" value="UniProtKB-KW"/>
</dbReference>
<dbReference type="GO" id="GO:0004601">
    <property type="term" value="F:peroxidase activity"/>
    <property type="evidence" value="ECO:0007669"/>
    <property type="project" value="TreeGrafter"/>
</dbReference>
<dbReference type="GO" id="GO:0042744">
    <property type="term" value="P:hydrogen peroxide catabolic process"/>
    <property type="evidence" value="ECO:0007669"/>
    <property type="project" value="TreeGrafter"/>
</dbReference>
<dbReference type="CDD" id="cd08925">
    <property type="entry name" value="Hb-beta-like"/>
    <property type="match status" value="1"/>
</dbReference>
<dbReference type="FunFam" id="1.10.490.10:FF:000001">
    <property type="entry name" value="Hemoglobin subunit beta"/>
    <property type="match status" value="1"/>
</dbReference>
<dbReference type="Gene3D" id="1.10.490.10">
    <property type="entry name" value="Globins"/>
    <property type="match status" value="1"/>
</dbReference>
<dbReference type="InterPro" id="IPR000971">
    <property type="entry name" value="Globin"/>
</dbReference>
<dbReference type="InterPro" id="IPR009050">
    <property type="entry name" value="Globin-like_sf"/>
</dbReference>
<dbReference type="InterPro" id="IPR012292">
    <property type="entry name" value="Globin/Proto"/>
</dbReference>
<dbReference type="InterPro" id="IPR002337">
    <property type="entry name" value="Hemoglobin_b"/>
</dbReference>
<dbReference type="InterPro" id="IPR050056">
    <property type="entry name" value="Hemoglobin_oxygen_transport"/>
</dbReference>
<dbReference type="PANTHER" id="PTHR11442">
    <property type="entry name" value="HEMOGLOBIN FAMILY MEMBER"/>
    <property type="match status" value="1"/>
</dbReference>
<dbReference type="PANTHER" id="PTHR11442:SF7">
    <property type="entry name" value="HEMOGLOBIN SUBUNIT EPSILON"/>
    <property type="match status" value="1"/>
</dbReference>
<dbReference type="Pfam" id="PF00042">
    <property type="entry name" value="Globin"/>
    <property type="match status" value="1"/>
</dbReference>
<dbReference type="PRINTS" id="PR00814">
    <property type="entry name" value="BETAHAEM"/>
</dbReference>
<dbReference type="SUPFAM" id="SSF46458">
    <property type="entry name" value="Globin-like"/>
    <property type="match status" value="1"/>
</dbReference>
<dbReference type="PROSITE" id="PS01033">
    <property type="entry name" value="GLOBIN"/>
    <property type="match status" value="1"/>
</dbReference>
<evidence type="ECO:0000250" key="1">
    <source>
        <dbReference type="UniProtKB" id="P02086"/>
    </source>
</evidence>
<evidence type="ECO:0000250" key="2">
    <source>
        <dbReference type="UniProtKB" id="P68871"/>
    </source>
</evidence>
<evidence type="ECO:0000255" key="3">
    <source>
        <dbReference type="PROSITE-ProRule" id="PRU00238"/>
    </source>
</evidence>
<accession>Q28932</accession>
<reference key="1">
    <citation type="journal article" date="1996" name="Mol. Biol. Evol.">
        <title>A molecular and evolutionary study of the beta-globin gene family of the Australian marsupial Sminthopsis crassicaudata.</title>
        <authorList>
            <person name="Cooper S.J.B."/>
            <person name="Murphy R."/>
            <person name="Dolman G."/>
            <person name="Hussey D."/>
            <person name="Hope R.M."/>
        </authorList>
    </citation>
    <scope>NUCLEOTIDE SEQUENCE [GENOMIC DNA]</scope>
    <source>
        <strain>1843.1B</strain>
        <tissue>Liver</tissue>
    </source>
</reference>
<proteinExistence type="evidence at transcript level"/>